<name>UVRD_RICCN</name>
<gene>
    <name type="primary">uvrD</name>
    <name type="ordered locus">RC0624</name>
</gene>
<comment type="function">
    <text evidence="1">Has both ATPase and helicase activities. Unwinds DNA duplexes with 3' to 5' polarity with respect to the bound strand and initiates unwinding most effectively when a single-stranded region is present. Involved in the post-incision events of nucleotide excision repair and methyl-directed mismatch repair (By similarity).</text>
</comment>
<comment type="catalytic activity">
    <reaction>
        <text>Couples ATP hydrolysis with the unwinding of duplex DNA by translocating in the 3'-5' direction.</text>
        <dbReference type="EC" id="5.6.2.4"/>
    </reaction>
</comment>
<comment type="catalytic activity">
    <reaction>
        <text>ATP + H2O = ADP + phosphate + H(+)</text>
        <dbReference type="Rhea" id="RHEA:13065"/>
        <dbReference type="ChEBI" id="CHEBI:15377"/>
        <dbReference type="ChEBI" id="CHEBI:15378"/>
        <dbReference type="ChEBI" id="CHEBI:30616"/>
        <dbReference type="ChEBI" id="CHEBI:43474"/>
        <dbReference type="ChEBI" id="CHEBI:456216"/>
        <dbReference type="EC" id="5.6.2.4"/>
    </reaction>
</comment>
<comment type="similarity">
    <text evidence="4">Belongs to the helicase family. UvrD subfamily.</text>
</comment>
<keyword id="KW-0067">ATP-binding</keyword>
<keyword id="KW-0227">DNA damage</keyword>
<keyword id="KW-0234">DNA repair</keyword>
<keyword id="KW-0235">DNA replication</keyword>
<keyword id="KW-0238">DNA-binding</keyword>
<keyword id="KW-0347">Helicase</keyword>
<keyword id="KW-0378">Hydrolase</keyword>
<keyword id="KW-0413">Isomerase</keyword>
<keyword id="KW-0547">Nucleotide-binding</keyword>
<organism>
    <name type="scientific">Rickettsia conorii (strain ATCC VR-613 / Malish 7)</name>
    <dbReference type="NCBI Taxonomy" id="272944"/>
    <lineage>
        <taxon>Bacteria</taxon>
        <taxon>Pseudomonadati</taxon>
        <taxon>Pseudomonadota</taxon>
        <taxon>Alphaproteobacteria</taxon>
        <taxon>Rickettsiales</taxon>
        <taxon>Rickettsiaceae</taxon>
        <taxon>Rickettsieae</taxon>
        <taxon>Rickettsia</taxon>
        <taxon>spotted fever group</taxon>
    </lineage>
</organism>
<accession>Q92HZ6</accession>
<feature type="chain" id="PRO_0000286459" description="Probable DNA helicase II homolog">
    <location>
        <begin position="1"/>
        <end position="653"/>
    </location>
</feature>
<feature type="domain" description="UvrD-like helicase ATP-binding" evidence="2">
    <location>
        <begin position="8"/>
        <end position="288"/>
    </location>
</feature>
<feature type="domain" description="UvrD-like helicase C-terminal" evidence="3">
    <location>
        <begin position="289"/>
        <end position="559"/>
    </location>
</feature>
<feature type="binding site" evidence="2">
    <location>
        <begin position="32"/>
        <end position="37"/>
    </location>
    <ligand>
        <name>ATP</name>
        <dbReference type="ChEBI" id="CHEBI:30616"/>
    </ligand>
</feature>
<feature type="binding site" evidence="1">
    <location>
        <position position="286"/>
    </location>
    <ligand>
        <name>ATP</name>
        <dbReference type="ChEBI" id="CHEBI:30616"/>
    </ligand>
</feature>
<reference key="1">
    <citation type="journal article" date="2001" name="Science">
        <title>Mechanisms of evolution in Rickettsia conorii and R. prowazekii.</title>
        <authorList>
            <person name="Ogata H."/>
            <person name="Audic S."/>
            <person name="Renesto-Audiffren P."/>
            <person name="Fournier P.-E."/>
            <person name="Barbe V."/>
            <person name="Samson D."/>
            <person name="Roux V."/>
            <person name="Cossart P."/>
            <person name="Weissenbach J."/>
            <person name="Claverie J.-M."/>
            <person name="Raoult D."/>
        </authorList>
    </citation>
    <scope>NUCLEOTIDE SEQUENCE [LARGE SCALE GENOMIC DNA]</scope>
    <source>
        <strain>ATCC VR-613 / Malish 7</strain>
    </source>
</reference>
<evidence type="ECO:0000250" key="1"/>
<evidence type="ECO:0000255" key="2">
    <source>
        <dbReference type="PROSITE-ProRule" id="PRU00560"/>
    </source>
</evidence>
<evidence type="ECO:0000255" key="3">
    <source>
        <dbReference type="PROSITE-ProRule" id="PRU00617"/>
    </source>
</evidence>
<evidence type="ECO:0000305" key="4"/>
<dbReference type="EC" id="5.6.2.4"/>
<dbReference type="EMBL" id="AE006914">
    <property type="protein sequence ID" value="AAL03162.1"/>
    <property type="molecule type" value="Genomic_DNA"/>
</dbReference>
<dbReference type="PIR" id="H97777">
    <property type="entry name" value="H97777"/>
</dbReference>
<dbReference type="RefSeq" id="WP_010977253.1">
    <property type="nucleotide sequence ID" value="NC_003103.1"/>
</dbReference>
<dbReference type="SMR" id="Q92HZ6"/>
<dbReference type="GeneID" id="928808"/>
<dbReference type="KEGG" id="rco:RC0624"/>
<dbReference type="PATRIC" id="fig|272944.4.peg.710"/>
<dbReference type="HOGENOM" id="CLU_004585_5_10_5"/>
<dbReference type="Proteomes" id="UP000000816">
    <property type="component" value="Chromosome"/>
</dbReference>
<dbReference type="GO" id="GO:0005829">
    <property type="term" value="C:cytosol"/>
    <property type="evidence" value="ECO:0007669"/>
    <property type="project" value="TreeGrafter"/>
</dbReference>
<dbReference type="GO" id="GO:0033202">
    <property type="term" value="C:DNA helicase complex"/>
    <property type="evidence" value="ECO:0007669"/>
    <property type="project" value="TreeGrafter"/>
</dbReference>
<dbReference type="GO" id="GO:0043138">
    <property type="term" value="F:3'-5' DNA helicase activity"/>
    <property type="evidence" value="ECO:0007669"/>
    <property type="project" value="TreeGrafter"/>
</dbReference>
<dbReference type="GO" id="GO:0005524">
    <property type="term" value="F:ATP binding"/>
    <property type="evidence" value="ECO:0007669"/>
    <property type="project" value="UniProtKB-KW"/>
</dbReference>
<dbReference type="GO" id="GO:0016887">
    <property type="term" value="F:ATP hydrolysis activity"/>
    <property type="evidence" value="ECO:0007669"/>
    <property type="project" value="RHEA"/>
</dbReference>
<dbReference type="GO" id="GO:0003677">
    <property type="term" value="F:DNA binding"/>
    <property type="evidence" value="ECO:0007669"/>
    <property type="project" value="UniProtKB-KW"/>
</dbReference>
<dbReference type="GO" id="GO:0006260">
    <property type="term" value="P:DNA replication"/>
    <property type="evidence" value="ECO:0007669"/>
    <property type="project" value="UniProtKB-KW"/>
</dbReference>
<dbReference type="GO" id="GO:0000725">
    <property type="term" value="P:recombinational repair"/>
    <property type="evidence" value="ECO:0007669"/>
    <property type="project" value="TreeGrafter"/>
</dbReference>
<dbReference type="CDD" id="cd17932">
    <property type="entry name" value="DEXQc_UvrD"/>
    <property type="match status" value="1"/>
</dbReference>
<dbReference type="CDD" id="cd18807">
    <property type="entry name" value="SF1_C_UvrD"/>
    <property type="match status" value="1"/>
</dbReference>
<dbReference type="FunFam" id="3.40.50.300:FF:001890">
    <property type="entry name" value="DNA helicase"/>
    <property type="match status" value="1"/>
</dbReference>
<dbReference type="Gene3D" id="1.10.10.160">
    <property type="match status" value="1"/>
</dbReference>
<dbReference type="Gene3D" id="3.40.50.300">
    <property type="entry name" value="P-loop containing nucleotide triphosphate hydrolases"/>
    <property type="match status" value="2"/>
</dbReference>
<dbReference type="Gene3D" id="1.10.486.10">
    <property type="entry name" value="PCRA, domain 4"/>
    <property type="match status" value="1"/>
</dbReference>
<dbReference type="InterPro" id="IPR005751">
    <property type="entry name" value="ATP-dep_DNA_helicase_PcrA"/>
</dbReference>
<dbReference type="InterPro" id="IPR013986">
    <property type="entry name" value="DExx_box_DNA_helicase_dom_sf"/>
</dbReference>
<dbReference type="InterPro" id="IPR014017">
    <property type="entry name" value="DNA_helicase_UvrD-like_C"/>
</dbReference>
<dbReference type="InterPro" id="IPR000212">
    <property type="entry name" value="DNA_helicase_UvrD/REP"/>
</dbReference>
<dbReference type="InterPro" id="IPR027417">
    <property type="entry name" value="P-loop_NTPase"/>
</dbReference>
<dbReference type="InterPro" id="IPR014016">
    <property type="entry name" value="UvrD-like_ATP-bd"/>
</dbReference>
<dbReference type="NCBIfam" id="TIGR01073">
    <property type="entry name" value="pcrA"/>
    <property type="match status" value="1"/>
</dbReference>
<dbReference type="PANTHER" id="PTHR11070:SF2">
    <property type="entry name" value="ATP-DEPENDENT DNA HELICASE SRS2"/>
    <property type="match status" value="1"/>
</dbReference>
<dbReference type="PANTHER" id="PTHR11070">
    <property type="entry name" value="UVRD / RECB / PCRA DNA HELICASE FAMILY MEMBER"/>
    <property type="match status" value="1"/>
</dbReference>
<dbReference type="Pfam" id="PF00580">
    <property type="entry name" value="UvrD-helicase"/>
    <property type="match status" value="1"/>
</dbReference>
<dbReference type="Pfam" id="PF13361">
    <property type="entry name" value="UvrD_C"/>
    <property type="match status" value="1"/>
</dbReference>
<dbReference type="SUPFAM" id="SSF52540">
    <property type="entry name" value="P-loop containing nucleoside triphosphate hydrolases"/>
    <property type="match status" value="1"/>
</dbReference>
<dbReference type="PROSITE" id="PS51198">
    <property type="entry name" value="UVRD_HELICASE_ATP_BIND"/>
    <property type="match status" value="1"/>
</dbReference>
<dbReference type="PROSITE" id="PS51217">
    <property type="entry name" value="UVRD_HELICASE_CTER"/>
    <property type="match status" value="1"/>
</dbReference>
<proteinExistence type="inferred from homology"/>
<sequence length="653" mass="75051">MQNQDFIHTLNPEQQKAVLHTEGPLLLLAGAGTGKTKVLTSRIANIIHQNLASPQNILAVTFTNKAAKEMAERVNSLINCYGLNIGTFHSMAARILRDQIEHLNLGLNNRFTIISHDDQLKLVKDIVKLKDIDTKKYAPKLIHIIISRWKDQGLLPTKLSVSDTNLPLQRVAKLVYEEYQKNLLISNVLDFGDLLLYNNELFIKNSEILRYYQEKYRYILIDEYQDTNVVQYLWARMLASLYKNICCVGDDDQSIYGWRGAEVGNILRFEKDFAGATIIKLEQNYRSTLPILAAASNVINNNKNRHGKTLWTDRENGEKIKIISCWSDKEEARYIAGEIDKLVRENRYNAGNIAILVRAGFQTRSFEEAFINSAMPYKIIGGLRFYERMEIRDVLAYIRISLNQNDNLALERIINVPKRAIGAASLNKIRGYALERNISNFAAIKEMLEIGEIKAKSYETLKDLVTKIDNWYERFSIDAPINVVKAILDDSGYLEMLQEEKTEEAFGRIENINEMLRAIAEFNDVHDFIEHSSLVMENEVLETNYGGSVTIMTLHAAKGLEFDVVFLPGWEEGVFPSQRSLDEEGEKGLEEERRIAYVGITRAKKDLYITHAESRKIFYEIVRSYPSRFITEIPDEITIRTSSMKKYNSFYKF</sequence>
<protein>
    <recommendedName>
        <fullName>Probable DNA helicase II homolog</fullName>
        <ecNumber>5.6.2.4</ecNumber>
    </recommendedName>
    <alternativeName>
        <fullName evidence="4">DNA 3'-5' helicase II</fullName>
    </alternativeName>
</protein>